<proteinExistence type="evidence at transcript level"/>
<protein>
    <recommendedName>
        <fullName>Tagatose 1,6-diphosphate aldolase</fullName>
        <ecNumber>4.1.2.40</ecNumber>
    </recommendedName>
    <alternativeName>
        <fullName>D-tagatose-1,6-bisphosphate aldolase</fullName>
    </alternativeName>
    <alternativeName>
        <fullName>Tagatose-bisphosphate aldolase</fullName>
    </alternativeName>
</protein>
<comment type="catalytic activity">
    <reaction>
        <text>D-tagatofuranose 1,6-bisphosphate = D-glyceraldehyde 3-phosphate + dihydroxyacetone phosphate</text>
        <dbReference type="Rhea" id="RHEA:22948"/>
        <dbReference type="ChEBI" id="CHEBI:57642"/>
        <dbReference type="ChEBI" id="CHEBI:58694"/>
        <dbReference type="ChEBI" id="CHEBI:59776"/>
        <dbReference type="EC" id="4.1.2.40"/>
    </reaction>
</comment>
<comment type="pathway">
    <text>Carbohydrate metabolism; D-tagatose 6-phosphate degradation; D-glyceraldehyde 3-phosphate and glycerone phosphate from D-tagatose 6-phosphate: step 2/2.</text>
</comment>
<comment type="induction">
    <text evidence="1">By lactose. The operon consists of lacABCDFEGX.</text>
</comment>
<comment type="miscellaneous">
    <text>This gene was sequenced from pMG820, a laboratory-derived deletion of the naturally occurring plasmid pLP712.</text>
</comment>
<comment type="similarity">
    <text evidence="2">Belongs to the aldolase LacD family.</text>
</comment>
<name>LACD_LACLL</name>
<geneLocation type="plasmid">
    <name>pLP712</name>
</geneLocation>
<gene>
    <name type="primary">lacD</name>
</gene>
<evidence type="ECO:0000269" key="1">
    <source>
    </source>
</evidence>
<evidence type="ECO:0000305" key="2"/>
<accession>P26593</accession>
<dbReference type="EC" id="4.1.2.40"/>
<dbReference type="EMBL" id="M60447">
    <property type="protein sequence ID" value="AAA25180.1"/>
    <property type="molecule type" value="Genomic_DNA"/>
</dbReference>
<dbReference type="EMBL" id="M65190">
    <property type="protein sequence ID" value="AAA25171.1"/>
    <property type="molecule type" value="Genomic_DNA"/>
</dbReference>
<dbReference type="PIR" id="D39778">
    <property type="entry name" value="D39778"/>
</dbReference>
<dbReference type="SMR" id="P26593"/>
<dbReference type="UniPathway" id="UPA00704">
    <property type="reaction ID" value="UER00716"/>
</dbReference>
<dbReference type="GO" id="GO:0061595">
    <property type="term" value="F:6-deoxy-6-sulfofructose-1-phosphate aldolase activity"/>
    <property type="evidence" value="ECO:0007669"/>
    <property type="project" value="TreeGrafter"/>
</dbReference>
<dbReference type="GO" id="GO:0009024">
    <property type="term" value="F:tagatose-6-phosphate kinase activity"/>
    <property type="evidence" value="ECO:0007669"/>
    <property type="project" value="InterPro"/>
</dbReference>
<dbReference type="GO" id="GO:0009025">
    <property type="term" value="F:tagatose-bisphosphate aldolase activity"/>
    <property type="evidence" value="ECO:0007669"/>
    <property type="project" value="UniProtKB-UniRule"/>
</dbReference>
<dbReference type="GO" id="GO:1902777">
    <property type="term" value="P:6-sulfoquinovose(1-) catabolic process"/>
    <property type="evidence" value="ECO:0007669"/>
    <property type="project" value="TreeGrafter"/>
</dbReference>
<dbReference type="GO" id="GO:2001059">
    <property type="term" value="P:D-tagatose 6-phosphate catabolic process"/>
    <property type="evidence" value="ECO:0007669"/>
    <property type="project" value="UniProtKB-UniRule"/>
</dbReference>
<dbReference type="GO" id="GO:0019512">
    <property type="term" value="P:lactose catabolic process via tagatose-6-phosphate"/>
    <property type="evidence" value="ECO:0007669"/>
    <property type="project" value="InterPro"/>
</dbReference>
<dbReference type="FunFam" id="3.20.20.70:FF:000137">
    <property type="entry name" value="Tagatose 1,6-diphosphate aldolase 2"/>
    <property type="match status" value="1"/>
</dbReference>
<dbReference type="Gene3D" id="3.20.20.70">
    <property type="entry name" value="Aldolase class I"/>
    <property type="match status" value="1"/>
</dbReference>
<dbReference type="HAMAP" id="MF_00734">
    <property type="entry name" value="LacD"/>
    <property type="match status" value="1"/>
</dbReference>
<dbReference type="InterPro" id="IPR013785">
    <property type="entry name" value="Aldolase_TIM"/>
</dbReference>
<dbReference type="InterPro" id="IPR002915">
    <property type="entry name" value="DeoC/FbaB/LacD_aldolase"/>
</dbReference>
<dbReference type="InterPro" id="IPR050552">
    <property type="entry name" value="LacD_aldolase"/>
</dbReference>
<dbReference type="InterPro" id="IPR005927">
    <property type="entry name" value="Tag_1.6-dipho_adolase"/>
</dbReference>
<dbReference type="NCBIfam" id="TIGR01232">
    <property type="entry name" value="lacD"/>
    <property type="match status" value="1"/>
</dbReference>
<dbReference type="NCBIfam" id="NF003180">
    <property type="entry name" value="PRK04161.1"/>
    <property type="match status" value="1"/>
</dbReference>
<dbReference type="NCBIfam" id="NF009065">
    <property type="entry name" value="PRK12399.1"/>
    <property type="match status" value="1"/>
</dbReference>
<dbReference type="NCBIfam" id="NF009498">
    <property type="entry name" value="PRK12858.1"/>
    <property type="match status" value="1"/>
</dbReference>
<dbReference type="PANTHER" id="PTHR39340">
    <property type="entry name" value="SULFOFRUCTOSEPHOSPHATE ALDOLASE"/>
    <property type="match status" value="1"/>
</dbReference>
<dbReference type="PANTHER" id="PTHR39340:SF1">
    <property type="entry name" value="SULFOFRUCTOSEPHOSPHATE ALDOLASE"/>
    <property type="match status" value="1"/>
</dbReference>
<dbReference type="Pfam" id="PF01791">
    <property type="entry name" value="DeoC"/>
    <property type="match status" value="1"/>
</dbReference>
<dbReference type="SMART" id="SM01133">
    <property type="entry name" value="DeoC"/>
    <property type="match status" value="1"/>
</dbReference>
<dbReference type="SUPFAM" id="SSF51569">
    <property type="entry name" value="Aldolase"/>
    <property type="match status" value="1"/>
</dbReference>
<keyword id="KW-0423">Lactose metabolism</keyword>
<keyword id="KW-0456">Lyase</keyword>
<keyword id="KW-0614">Plasmid</keyword>
<organism>
    <name type="scientific">Lactococcus lactis subsp. lactis</name>
    <name type="common">Streptococcus lactis</name>
    <dbReference type="NCBI Taxonomy" id="1360"/>
    <lineage>
        <taxon>Bacteria</taxon>
        <taxon>Bacillati</taxon>
        <taxon>Bacillota</taxon>
        <taxon>Bacilli</taxon>
        <taxon>Lactobacillales</taxon>
        <taxon>Streptococcaceae</taxon>
        <taxon>Lactococcus</taxon>
    </lineage>
</organism>
<feature type="chain" id="PRO_0000203940" description="Tagatose 1,6-diphosphate aldolase">
    <location>
        <begin position="1"/>
        <end position="326"/>
    </location>
</feature>
<sequence>MVLTEQKRKSLEKLSDKNGFISALAFDQRGALKRLMAQYQDTEPTVAQMEELKVLVADELTKYASSMLLDPEYGLPATKALDKEAGLLLAFEKTGYDTSSTKRLPDCLDVWSAKRIKEQGADAVKFLLYYDVDSSDELNQQKQAYIERVGSECVAEDIPFFLEILAYDEEISDAGSVEYAKVKPRKVIEAMKVFSDPRFNIDVLKVEVPVNVKYVEGFADGEVVYSKAEAADFFKAQEEATNLPYIYLSAGVSAKLFQETLQFAHDSGAKFNGVLCGRATWAGSVEPYIKEGEKAAREWLRTTGFENIDELNKVLVKTASPWTDKV</sequence>
<reference key="1">
    <citation type="journal article" date="1991" name="J. Biol. Chem.">
        <title>Molecular cloning, characterization, and nucleotide sequence of the tagatose 6-phosphate pathway gene cluster of the lactose operon of Lactococcus lactis.</title>
        <authorList>
            <person name="van Rooijen R.J."/>
            <person name="van Schalkwijk S."/>
            <person name="de Vos W.M."/>
        </authorList>
    </citation>
    <scope>NUCLEOTIDE SEQUENCE [GENOMIC DNA]</scope>
    <scope>OPERON STRUCTURE</scope>
    <scope>INDUCTION</scope>
    <source>
        <strain>MG1820</strain>
    </source>
</reference>
<reference key="2">
    <citation type="journal article" date="1990" name="J. Biol. Chem.">
        <title>Characterization of the lactose-specific enzymes of the phosphotransferase system in Lactococcus lactis.</title>
        <authorList>
            <person name="de Vos W.M."/>
            <person name="Boerrigter I.J."/>
            <person name="van Rooyen R.J."/>
            <person name="Reiche B."/>
            <person name="Hengstenberg W."/>
        </authorList>
    </citation>
    <scope>NUCLEOTIDE SEQUENCE [GENOMIC DNA] OF 317-326</scope>
    <source>
        <strain>MG1820</strain>
    </source>
</reference>